<protein>
    <recommendedName>
        <fullName evidence="2">Elongation factor G</fullName>
        <shortName evidence="2">EF-G</shortName>
    </recommendedName>
</protein>
<gene>
    <name evidence="2" type="primary">fusA</name>
    <name type="ordered locus">SBO_3321</name>
</gene>
<evidence type="ECO:0000250" key="1"/>
<evidence type="ECO:0000255" key="2">
    <source>
        <dbReference type="HAMAP-Rule" id="MF_00054"/>
    </source>
</evidence>
<organism>
    <name type="scientific">Shigella boydii serotype 4 (strain Sb227)</name>
    <dbReference type="NCBI Taxonomy" id="300268"/>
    <lineage>
        <taxon>Bacteria</taxon>
        <taxon>Pseudomonadati</taxon>
        <taxon>Pseudomonadota</taxon>
        <taxon>Gammaproteobacteria</taxon>
        <taxon>Enterobacterales</taxon>
        <taxon>Enterobacteriaceae</taxon>
        <taxon>Shigella</taxon>
    </lineage>
</organism>
<name>EFG_SHIBS</name>
<comment type="function">
    <text evidence="2">Catalyzes the GTP-dependent ribosomal translocation step during translation elongation. During this step, the ribosome changes from the pre-translocational (PRE) to the post-translocational (POST) state as the newly formed A-site-bound peptidyl-tRNA and P-site-bound deacylated tRNA move to the P and E sites, respectively. Catalyzes the coordinated movement of the two tRNA molecules, the mRNA and conformational changes in the ribosome.</text>
</comment>
<comment type="subcellular location">
    <subcellularLocation>
        <location evidence="2">Cytoplasm</location>
    </subcellularLocation>
</comment>
<comment type="similarity">
    <text evidence="2">Belongs to the TRAFAC class translation factor GTPase superfamily. Classic translation factor GTPase family. EF-G/EF-2 subfamily.</text>
</comment>
<reference key="1">
    <citation type="journal article" date="2005" name="Nucleic Acids Res.">
        <title>Genome dynamics and diversity of Shigella species, the etiologic agents of bacillary dysentery.</title>
        <authorList>
            <person name="Yang F."/>
            <person name="Yang J."/>
            <person name="Zhang X."/>
            <person name="Chen L."/>
            <person name="Jiang Y."/>
            <person name="Yan Y."/>
            <person name="Tang X."/>
            <person name="Wang J."/>
            <person name="Xiong Z."/>
            <person name="Dong J."/>
            <person name="Xue Y."/>
            <person name="Zhu Y."/>
            <person name="Xu X."/>
            <person name="Sun L."/>
            <person name="Chen S."/>
            <person name="Nie H."/>
            <person name="Peng J."/>
            <person name="Xu J."/>
            <person name="Wang Y."/>
            <person name="Yuan Z."/>
            <person name="Wen Y."/>
            <person name="Yao Z."/>
            <person name="Shen Y."/>
            <person name="Qiang B."/>
            <person name="Hou Y."/>
            <person name="Yu J."/>
            <person name="Jin Q."/>
        </authorList>
    </citation>
    <scope>NUCLEOTIDE SEQUENCE [LARGE SCALE GENOMIC DNA]</scope>
    <source>
        <strain>Sb227</strain>
    </source>
</reference>
<sequence>MARTTPIARYRNIGISAHIDAGKTTTTERILFYTGVNHKIGEVHDGAATMDWMEQEQERGITITSAATTAFWSGMAKQYEPHRINIIDTPGHVDFTIEVERSMRVLDGAVMVYCAVGGVQPQSETVWRQANKYKVPRIAFVNKMDRMGANFLKVVNQIKTRLGANPVPLQLAIGAEEHFTGVVDLVKMKAINWNDADQGVTFEYEDIPADMVELANEWHQNLIESAAEASEELMEKYLGGEELTEAEIKGALRQRVLNNEIILVTCGSAFKNKGVQAMLDAVIDYLPSPVDVPAINGILDDGKDTPAERHASDDEPFSALAFKIATDPFVGNLTFFRVYSGVVNSGDTVLNSVKAARERFGRIVQMHANKREEIKEVRAGDIAAAIGLKDVTTGDTLCDPDAPIILERMEFPEPVISIAVEPKTKADQEKMGLALGRLAKEDPSFRVWTDEESNQTIIAGMGELHLDIIVDRMKREFNVEANVGKPQVAYRETIRQKVTDVEGKHAKQSGGRGQYGHVVIDMYPLEPGSNPKGYEFINDIKGGVIPGEYIPAVDKGIQEQLKAGPLAGYPVVDMGIRLHFGSYHDVDSSELAFKLAASIAFKEGFKKAKPVLLEPIMKVEVETPEENTGDVIGDLSRRRGMLKGQESEVTGVKIHAEVPLSEMFGYATQLRSLTKGRASYTMEFLKYDEAPSNVAQAVIEARGK</sequence>
<keyword id="KW-0007">Acetylation</keyword>
<keyword id="KW-0963">Cytoplasm</keyword>
<keyword id="KW-0251">Elongation factor</keyword>
<keyword id="KW-0342">GTP-binding</keyword>
<keyword id="KW-0547">Nucleotide-binding</keyword>
<keyword id="KW-0648">Protein biosynthesis</keyword>
<feature type="chain" id="PRO_0000225238" description="Elongation factor G">
    <location>
        <begin position="1"/>
        <end position="704"/>
    </location>
</feature>
<feature type="domain" description="tr-type G">
    <location>
        <begin position="8"/>
        <end position="290"/>
    </location>
</feature>
<feature type="binding site" evidence="2">
    <location>
        <begin position="17"/>
        <end position="24"/>
    </location>
    <ligand>
        <name>GTP</name>
        <dbReference type="ChEBI" id="CHEBI:37565"/>
    </ligand>
</feature>
<feature type="binding site" evidence="2">
    <location>
        <begin position="88"/>
        <end position="92"/>
    </location>
    <ligand>
        <name>GTP</name>
        <dbReference type="ChEBI" id="CHEBI:37565"/>
    </ligand>
</feature>
<feature type="binding site" evidence="2">
    <location>
        <begin position="142"/>
        <end position="145"/>
    </location>
    <ligand>
        <name>GTP</name>
        <dbReference type="ChEBI" id="CHEBI:37565"/>
    </ligand>
</feature>
<feature type="modified residue" description="N6-acetyllysine" evidence="1">
    <location>
        <position position="504"/>
    </location>
</feature>
<feature type="modified residue" description="N6-acetyllysine" evidence="1">
    <location>
        <position position="643"/>
    </location>
</feature>
<proteinExistence type="inferred from homology"/>
<dbReference type="EMBL" id="CP000036">
    <property type="protein sequence ID" value="ABB67809.1"/>
    <property type="molecule type" value="Genomic_DNA"/>
</dbReference>
<dbReference type="RefSeq" id="WP_000124700.1">
    <property type="nucleotide sequence ID" value="NC_007613.1"/>
</dbReference>
<dbReference type="SMR" id="Q31VU9"/>
<dbReference type="GeneID" id="93778658"/>
<dbReference type="KEGG" id="sbo:SBO_3321"/>
<dbReference type="HOGENOM" id="CLU_002794_4_1_6"/>
<dbReference type="Proteomes" id="UP000007067">
    <property type="component" value="Chromosome"/>
</dbReference>
<dbReference type="GO" id="GO:0005737">
    <property type="term" value="C:cytoplasm"/>
    <property type="evidence" value="ECO:0007669"/>
    <property type="project" value="UniProtKB-SubCell"/>
</dbReference>
<dbReference type="GO" id="GO:0005525">
    <property type="term" value="F:GTP binding"/>
    <property type="evidence" value="ECO:0007669"/>
    <property type="project" value="UniProtKB-UniRule"/>
</dbReference>
<dbReference type="GO" id="GO:0003924">
    <property type="term" value="F:GTPase activity"/>
    <property type="evidence" value="ECO:0007669"/>
    <property type="project" value="InterPro"/>
</dbReference>
<dbReference type="GO" id="GO:0097216">
    <property type="term" value="F:guanosine tetraphosphate binding"/>
    <property type="evidence" value="ECO:0007669"/>
    <property type="project" value="UniProtKB-ARBA"/>
</dbReference>
<dbReference type="GO" id="GO:0003746">
    <property type="term" value="F:translation elongation factor activity"/>
    <property type="evidence" value="ECO:0007669"/>
    <property type="project" value="UniProtKB-UniRule"/>
</dbReference>
<dbReference type="GO" id="GO:0032790">
    <property type="term" value="P:ribosome disassembly"/>
    <property type="evidence" value="ECO:0007669"/>
    <property type="project" value="TreeGrafter"/>
</dbReference>
<dbReference type="CDD" id="cd01886">
    <property type="entry name" value="EF-G"/>
    <property type="match status" value="1"/>
</dbReference>
<dbReference type="CDD" id="cd16262">
    <property type="entry name" value="EFG_III"/>
    <property type="match status" value="1"/>
</dbReference>
<dbReference type="CDD" id="cd01434">
    <property type="entry name" value="EFG_mtEFG1_IV"/>
    <property type="match status" value="1"/>
</dbReference>
<dbReference type="CDD" id="cd03713">
    <property type="entry name" value="EFG_mtEFG_C"/>
    <property type="match status" value="1"/>
</dbReference>
<dbReference type="CDD" id="cd04088">
    <property type="entry name" value="EFG_mtEFG_II"/>
    <property type="match status" value="1"/>
</dbReference>
<dbReference type="FunFam" id="2.40.30.10:FF:000006">
    <property type="entry name" value="Elongation factor G"/>
    <property type="match status" value="1"/>
</dbReference>
<dbReference type="FunFam" id="3.30.230.10:FF:000003">
    <property type="entry name" value="Elongation factor G"/>
    <property type="match status" value="1"/>
</dbReference>
<dbReference type="FunFam" id="3.30.70.240:FF:000001">
    <property type="entry name" value="Elongation factor G"/>
    <property type="match status" value="1"/>
</dbReference>
<dbReference type="FunFam" id="3.30.70.870:FF:000001">
    <property type="entry name" value="Elongation factor G"/>
    <property type="match status" value="1"/>
</dbReference>
<dbReference type="FunFam" id="3.40.50.300:FF:000029">
    <property type="entry name" value="Elongation factor G"/>
    <property type="match status" value="1"/>
</dbReference>
<dbReference type="Gene3D" id="3.30.230.10">
    <property type="match status" value="1"/>
</dbReference>
<dbReference type="Gene3D" id="3.30.70.240">
    <property type="match status" value="1"/>
</dbReference>
<dbReference type="Gene3D" id="3.30.70.870">
    <property type="entry name" value="Elongation Factor G (Translational Gtpase), domain 3"/>
    <property type="match status" value="1"/>
</dbReference>
<dbReference type="Gene3D" id="3.40.50.300">
    <property type="entry name" value="P-loop containing nucleotide triphosphate hydrolases"/>
    <property type="match status" value="1"/>
</dbReference>
<dbReference type="Gene3D" id="2.40.30.10">
    <property type="entry name" value="Translation factors"/>
    <property type="match status" value="1"/>
</dbReference>
<dbReference type="HAMAP" id="MF_00054_B">
    <property type="entry name" value="EF_G_EF_2_B"/>
    <property type="match status" value="1"/>
</dbReference>
<dbReference type="InterPro" id="IPR041095">
    <property type="entry name" value="EFG_II"/>
</dbReference>
<dbReference type="InterPro" id="IPR009022">
    <property type="entry name" value="EFG_III"/>
</dbReference>
<dbReference type="InterPro" id="IPR035647">
    <property type="entry name" value="EFG_III/V"/>
</dbReference>
<dbReference type="InterPro" id="IPR047872">
    <property type="entry name" value="EFG_IV"/>
</dbReference>
<dbReference type="InterPro" id="IPR035649">
    <property type="entry name" value="EFG_V"/>
</dbReference>
<dbReference type="InterPro" id="IPR000640">
    <property type="entry name" value="EFG_V-like"/>
</dbReference>
<dbReference type="InterPro" id="IPR004161">
    <property type="entry name" value="EFTu-like_2"/>
</dbReference>
<dbReference type="InterPro" id="IPR031157">
    <property type="entry name" value="G_TR_CS"/>
</dbReference>
<dbReference type="InterPro" id="IPR027417">
    <property type="entry name" value="P-loop_NTPase"/>
</dbReference>
<dbReference type="InterPro" id="IPR020568">
    <property type="entry name" value="Ribosomal_Su5_D2-typ_SF"/>
</dbReference>
<dbReference type="InterPro" id="IPR014721">
    <property type="entry name" value="Ribsml_uS5_D2-typ_fold_subgr"/>
</dbReference>
<dbReference type="InterPro" id="IPR005225">
    <property type="entry name" value="Small_GTP-bd"/>
</dbReference>
<dbReference type="InterPro" id="IPR000795">
    <property type="entry name" value="T_Tr_GTP-bd_dom"/>
</dbReference>
<dbReference type="InterPro" id="IPR009000">
    <property type="entry name" value="Transl_B-barrel_sf"/>
</dbReference>
<dbReference type="InterPro" id="IPR004540">
    <property type="entry name" value="Transl_elong_EFG/EF2"/>
</dbReference>
<dbReference type="InterPro" id="IPR005517">
    <property type="entry name" value="Transl_elong_EFG/EF2_IV"/>
</dbReference>
<dbReference type="NCBIfam" id="TIGR00484">
    <property type="entry name" value="EF-G"/>
    <property type="match status" value="1"/>
</dbReference>
<dbReference type="NCBIfam" id="NF009381">
    <property type="entry name" value="PRK12740.1-5"/>
    <property type="match status" value="1"/>
</dbReference>
<dbReference type="NCBIfam" id="TIGR00231">
    <property type="entry name" value="small_GTP"/>
    <property type="match status" value="1"/>
</dbReference>
<dbReference type="PANTHER" id="PTHR43261:SF1">
    <property type="entry name" value="RIBOSOME-RELEASING FACTOR 2, MITOCHONDRIAL"/>
    <property type="match status" value="1"/>
</dbReference>
<dbReference type="PANTHER" id="PTHR43261">
    <property type="entry name" value="TRANSLATION ELONGATION FACTOR G-RELATED"/>
    <property type="match status" value="1"/>
</dbReference>
<dbReference type="Pfam" id="PF00679">
    <property type="entry name" value="EFG_C"/>
    <property type="match status" value="1"/>
</dbReference>
<dbReference type="Pfam" id="PF14492">
    <property type="entry name" value="EFG_III"/>
    <property type="match status" value="1"/>
</dbReference>
<dbReference type="Pfam" id="PF03764">
    <property type="entry name" value="EFG_IV"/>
    <property type="match status" value="1"/>
</dbReference>
<dbReference type="Pfam" id="PF00009">
    <property type="entry name" value="GTP_EFTU"/>
    <property type="match status" value="1"/>
</dbReference>
<dbReference type="Pfam" id="PF03144">
    <property type="entry name" value="GTP_EFTU_D2"/>
    <property type="match status" value="1"/>
</dbReference>
<dbReference type="PRINTS" id="PR00315">
    <property type="entry name" value="ELONGATNFCT"/>
</dbReference>
<dbReference type="SMART" id="SM00838">
    <property type="entry name" value="EFG_C"/>
    <property type="match status" value="1"/>
</dbReference>
<dbReference type="SMART" id="SM00889">
    <property type="entry name" value="EFG_IV"/>
    <property type="match status" value="1"/>
</dbReference>
<dbReference type="SUPFAM" id="SSF54980">
    <property type="entry name" value="EF-G C-terminal domain-like"/>
    <property type="match status" value="2"/>
</dbReference>
<dbReference type="SUPFAM" id="SSF52540">
    <property type="entry name" value="P-loop containing nucleoside triphosphate hydrolases"/>
    <property type="match status" value="1"/>
</dbReference>
<dbReference type="SUPFAM" id="SSF54211">
    <property type="entry name" value="Ribosomal protein S5 domain 2-like"/>
    <property type="match status" value="1"/>
</dbReference>
<dbReference type="SUPFAM" id="SSF50447">
    <property type="entry name" value="Translation proteins"/>
    <property type="match status" value="1"/>
</dbReference>
<dbReference type="PROSITE" id="PS00301">
    <property type="entry name" value="G_TR_1"/>
    <property type="match status" value="1"/>
</dbReference>
<dbReference type="PROSITE" id="PS51722">
    <property type="entry name" value="G_TR_2"/>
    <property type="match status" value="1"/>
</dbReference>
<accession>Q31VU9</accession>